<comment type="function">
    <text evidence="1">Involved in lipopolysaccharide (LPS) biosynthesis. Translocates lipid A-core from the inner to the outer leaflet of the inner membrane. Transmembrane domains (TMD) form a pore in the inner membrane and the ATP-binding domain (NBD) is responsible for energy generation.</text>
</comment>
<comment type="catalytic activity">
    <reaction evidence="1">
        <text>ATP + H2O + lipid A-core oligosaccharideSide 1 = ADP + phosphate + lipid A-core oligosaccharideSide 2.</text>
        <dbReference type="EC" id="7.5.2.6"/>
    </reaction>
</comment>
<comment type="subunit">
    <text evidence="1">Homodimer.</text>
</comment>
<comment type="subcellular location">
    <subcellularLocation>
        <location evidence="1">Cell inner membrane</location>
        <topology evidence="1">Multi-pass membrane protein</topology>
    </subcellularLocation>
</comment>
<comment type="domain">
    <text evidence="1">In MsbA the ATP-binding domain (NBD) and the transmembrane domain (TMD) are fused.</text>
</comment>
<comment type="similarity">
    <text evidence="1">Belongs to the ABC transporter superfamily. Lipid exporter (TC 3.A.1.106) family.</text>
</comment>
<evidence type="ECO:0000255" key="1">
    <source>
        <dbReference type="HAMAP-Rule" id="MF_01703"/>
    </source>
</evidence>
<proteinExistence type="inferred from homology"/>
<keyword id="KW-0067">ATP-binding</keyword>
<keyword id="KW-0997">Cell inner membrane</keyword>
<keyword id="KW-1003">Cell membrane</keyword>
<keyword id="KW-0445">Lipid transport</keyword>
<keyword id="KW-0472">Membrane</keyword>
<keyword id="KW-0547">Nucleotide-binding</keyword>
<keyword id="KW-1278">Translocase</keyword>
<keyword id="KW-0812">Transmembrane</keyword>
<keyword id="KW-1133">Transmembrane helix</keyword>
<keyword id="KW-0813">Transport</keyword>
<accession>Q0TJD9</accession>
<name>MSBA_ECOL5</name>
<feature type="chain" id="PRO_0000271624" description="ATP-dependent lipid A-core flippase">
    <location>
        <begin position="1"/>
        <end position="582"/>
    </location>
</feature>
<feature type="transmembrane region" description="Helical" evidence="1">
    <location>
        <begin position="16"/>
        <end position="36"/>
    </location>
</feature>
<feature type="transmembrane region" description="Helical" evidence="1">
    <location>
        <begin position="64"/>
        <end position="84"/>
    </location>
</feature>
<feature type="transmembrane region" description="Helical" evidence="1">
    <location>
        <begin position="153"/>
        <end position="173"/>
    </location>
</feature>
<feature type="transmembrane region" description="Helical" evidence="1">
    <location>
        <begin position="253"/>
        <end position="273"/>
    </location>
</feature>
<feature type="transmembrane region" description="Helical" evidence="1">
    <location>
        <begin position="275"/>
        <end position="295"/>
    </location>
</feature>
<feature type="domain" description="ABC transmembrane type-1" evidence="1">
    <location>
        <begin position="28"/>
        <end position="310"/>
    </location>
</feature>
<feature type="domain" description="ABC transporter" evidence="1">
    <location>
        <begin position="342"/>
        <end position="578"/>
    </location>
</feature>
<feature type="binding site" evidence="1">
    <location>
        <begin position="376"/>
        <end position="383"/>
    </location>
    <ligand>
        <name>ATP</name>
        <dbReference type="ChEBI" id="CHEBI:30616"/>
    </ligand>
</feature>
<dbReference type="EC" id="7.5.2.6" evidence="1"/>
<dbReference type="EMBL" id="CP000247">
    <property type="protein sequence ID" value="ABG68940.1"/>
    <property type="molecule type" value="Genomic_DNA"/>
</dbReference>
<dbReference type="RefSeq" id="WP_000551259.1">
    <property type="nucleotide sequence ID" value="NC_008253.1"/>
</dbReference>
<dbReference type="SMR" id="Q0TJD9"/>
<dbReference type="KEGG" id="ecp:ECP_0925"/>
<dbReference type="HOGENOM" id="CLU_000604_84_3_6"/>
<dbReference type="Proteomes" id="UP000009182">
    <property type="component" value="Chromosome"/>
</dbReference>
<dbReference type="GO" id="GO:0005886">
    <property type="term" value="C:plasma membrane"/>
    <property type="evidence" value="ECO:0007669"/>
    <property type="project" value="UniProtKB-SubCell"/>
</dbReference>
<dbReference type="GO" id="GO:0015421">
    <property type="term" value="F:ABC-type oligopeptide transporter activity"/>
    <property type="evidence" value="ECO:0007669"/>
    <property type="project" value="TreeGrafter"/>
</dbReference>
<dbReference type="GO" id="GO:0005524">
    <property type="term" value="F:ATP binding"/>
    <property type="evidence" value="ECO:0007669"/>
    <property type="project" value="UniProtKB-KW"/>
</dbReference>
<dbReference type="GO" id="GO:0016887">
    <property type="term" value="F:ATP hydrolysis activity"/>
    <property type="evidence" value="ECO:0007669"/>
    <property type="project" value="InterPro"/>
</dbReference>
<dbReference type="GO" id="GO:0034040">
    <property type="term" value="F:ATPase-coupled lipid transmembrane transporter activity"/>
    <property type="evidence" value="ECO:0007669"/>
    <property type="project" value="InterPro"/>
</dbReference>
<dbReference type="CDD" id="cd18552">
    <property type="entry name" value="ABC_6TM_MsbA_like"/>
    <property type="match status" value="1"/>
</dbReference>
<dbReference type="CDD" id="cd03251">
    <property type="entry name" value="ABCC_MsbA"/>
    <property type="match status" value="1"/>
</dbReference>
<dbReference type="FunFam" id="1.20.1560.10:FF:000008">
    <property type="entry name" value="Lipid A export ATP-binding/permease protein MsbA"/>
    <property type="match status" value="1"/>
</dbReference>
<dbReference type="FunFam" id="3.40.50.300:FF:000140">
    <property type="entry name" value="Lipid A export ATP-binding/permease protein MsbA"/>
    <property type="match status" value="1"/>
</dbReference>
<dbReference type="Gene3D" id="1.20.1560.10">
    <property type="entry name" value="ABC transporter type 1, transmembrane domain"/>
    <property type="match status" value="1"/>
</dbReference>
<dbReference type="Gene3D" id="3.40.50.300">
    <property type="entry name" value="P-loop containing nucleotide triphosphate hydrolases"/>
    <property type="match status" value="1"/>
</dbReference>
<dbReference type="InterPro" id="IPR003593">
    <property type="entry name" value="AAA+_ATPase"/>
</dbReference>
<dbReference type="InterPro" id="IPR011527">
    <property type="entry name" value="ABC1_TM_dom"/>
</dbReference>
<dbReference type="InterPro" id="IPR036640">
    <property type="entry name" value="ABC1_TM_sf"/>
</dbReference>
<dbReference type="InterPro" id="IPR003439">
    <property type="entry name" value="ABC_transporter-like_ATP-bd"/>
</dbReference>
<dbReference type="InterPro" id="IPR017871">
    <property type="entry name" value="ABC_transporter-like_CS"/>
</dbReference>
<dbReference type="InterPro" id="IPR011917">
    <property type="entry name" value="ABC_transpr_lipidA"/>
</dbReference>
<dbReference type="InterPro" id="IPR027417">
    <property type="entry name" value="P-loop_NTPase"/>
</dbReference>
<dbReference type="InterPro" id="IPR039421">
    <property type="entry name" value="Type_1_exporter"/>
</dbReference>
<dbReference type="NCBIfam" id="TIGR02203">
    <property type="entry name" value="MsbA_lipidA"/>
    <property type="match status" value="1"/>
</dbReference>
<dbReference type="NCBIfam" id="NF008381">
    <property type="entry name" value="PRK11176.1"/>
    <property type="match status" value="1"/>
</dbReference>
<dbReference type="PANTHER" id="PTHR43394:SF1">
    <property type="entry name" value="ATP-BINDING CASSETTE SUB-FAMILY B MEMBER 10, MITOCHONDRIAL"/>
    <property type="match status" value="1"/>
</dbReference>
<dbReference type="PANTHER" id="PTHR43394">
    <property type="entry name" value="ATP-DEPENDENT PERMEASE MDL1, MITOCHONDRIAL"/>
    <property type="match status" value="1"/>
</dbReference>
<dbReference type="Pfam" id="PF00664">
    <property type="entry name" value="ABC_membrane"/>
    <property type="match status" value="1"/>
</dbReference>
<dbReference type="Pfam" id="PF00005">
    <property type="entry name" value="ABC_tran"/>
    <property type="match status" value="1"/>
</dbReference>
<dbReference type="SMART" id="SM00382">
    <property type="entry name" value="AAA"/>
    <property type="match status" value="1"/>
</dbReference>
<dbReference type="SUPFAM" id="SSF90123">
    <property type="entry name" value="ABC transporter transmembrane region"/>
    <property type="match status" value="1"/>
</dbReference>
<dbReference type="SUPFAM" id="SSF52540">
    <property type="entry name" value="P-loop containing nucleoside triphosphate hydrolases"/>
    <property type="match status" value="1"/>
</dbReference>
<dbReference type="PROSITE" id="PS50929">
    <property type="entry name" value="ABC_TM1F"/>
    <property type="match status" value="1"/>
</dbReference>
<dbReference type="PROSITE" id="PS00211">
    <property type="entry name" value="ABC_TRANSPORTER_1"/>
    <property type="match status" value="1"/>
</dbReference>
<dbReference type="PROSITE" id="PS50893">
    <property type="entry name" value="ABC_TRANSPORTER_2"/>
    <property type="match status" value="1"/>
</dbReference>
<dbReference type="PROSITE" id="PS51239">
    <property type="entry name" value="MSBA"/>
    <property type="match status" value="1"/>
</dbReference>
<protein>
    <recommendedName>
        <fullName evidence="1">ATP-dependent lipid A-core flippase</fullName>
        <ecNumber evidence="1">7.5.2.6</ecNumber>
    </recommendedName>
    <alternativeName>
        <fullName evidence="1">Lipid A export ATP-binding/permease protein MsbA</fullName>
    </alternativeName>
</protein>
<reference key="1">
    <citation type="journal article" date="2006" name="Mol. Microbiol.">
        <title>Role of pathogenicity island-associated integrases in the genome plasticity of uropathogenic Escherichia coli strain 536.</title>
        <authorList>
            <person name="Hochhut B."/>
            <person name="Wilde C."/>
            <person name="Balling G."/>
            <person name="Middendorf B."/>
            <person name="Dobrindt U."/>
            <person name="Brzuszkiewicz E."/>
            <person name="Gottschalk G."/>
            <person name="Carniel E."/>
            <person name="Hacker J."/>
        </authorList>
    </citation>
    <scope>NUCLEOTIDE SEQUENCE [LARGE SCALE GENOMIC DNA]</scope>
    <source>
        <strain>536 / UPEC</strain>
    </source>
</reference>
<sequence>MHNDKDLSTWQTFRRLWPTIAPFKAGLIVAGVALILNAASDTFMLSLLKPLLDDGFGKTDRSVLMWMPLVVIGLMILRGITSYISSYCISWVSGKVVMTMRRRLFGHMMGMPVSFFDKQSTGTLLSRITYDSEQVASSSSGALITVVREGASIIGLFIMMFYYSWQLSIILIVLAPIVSIAIRVVSKRFRNISKNMQNTMGQVTTSAEQMLKGHKEVLIFGGQEVETKRFDKVSNRMRLQGMKMVSASSISDPIIQLIASLALAFVLYAASFPSVMDSLTAGTITVVFSSMIALMRPLKSLTNVNAQFQRGMAACQTLFTILDSEQEKDEGKRVIERATGDVEFRNVTFTYPGRDVPALRNINLKIPAGKTVALVGRSGSGKSTIASLITRFYDIDEGEILMDGHDLREYTLASLRNQVALVSQNVHLFNDTVANNIAYARTEQYSREQIEEAARMAYAMDFINKMDNGLDTVIGENGVLLSGGQRQRIAIARALLRDSPILILDEATSALDTESERAIQAALDELQKNRTSLVIAHRLSTIEKADEIVVVEDGVIVERGTHNDLLEHRGVYAQLHKMQFGQ</sequence>
<organism>
    <name type="scientific">Escherichia coli O6:K15:H31 (strain 536 / UPEC)</name>
    <dbReference type="NCBI Taxonomy" id="362663"/>
    <lineage>
        <taxon>Bacteria</taxon>
        <taxon>Pseudomonadati</taxon>
        <taxon>Pseudomonadota</taxon>
        <taxon>Gammaproteobacteria</taxon>
        <taxon>Enterobacterales</taxon>
        <taxon>Enterobacteriaceae</taxon>
        <taxon>Escherichia</taxon>
    </lineage>
</organism>
<gene>
    <name evidence="1" type="primary">msbA</name>
    <name type="ordered locus">ECP_0925</name>
</gene>